<sequence length="60" mass="6539">SVTIDYDKCKGPECAECVNACPMEVFEIQGDKVVVAKEDDCTFCMVCVDVCPTDAITVKE</sequence>
<accession>P21305</accession>
<protein>
    <recommendedName>
        <fullName>Ferredoxin</fullName>
    </recommendedName>
</protein>
<keyword id="KW-0004">4Fe-4S</keyword>
<keyword id="KW-0903">Direct protein sequencing</keyword>
<keyword id="KW-0249">Electron transport</keyword>
<keyword id="KW-0408">Iron</keyword>
<keyword id="KW-0411">Iron-sulfur</keyword>
<keyword id="KW-0479">Metal-binding</keyword>
<keyword id="KW-0677">Repeat</keyword>
<keyword id="KW-0813">Transport</keyword>
<reference key="1">
    <citation type="journal article" date="1991" name="Biochim. Biophys. Acta">
        <title>Amino acid sequence and molecular modelling of a thermostable two (4Fe-4S) ferredoxin from the archaebacterium Methanococcus thermolithotrophicus.</title>
        <authorList>
            <person name="Bruschi M."/>
            <person name="Bonicel J."/>
            <person name="Hatchikian E.C."/>
            <person name="Fardeau M.L."/>
            <person name="Belaich J.-P."/>
            <person name="Frey M."/>
        </authorList>
    </citation>
    <scope>PROTEIN SEQUENCE</scope>
</reference>
<comment type="function">
    <text>Ferredoxins are iron-sulfur proteins that transfer electrons probably in the CO-dehydrogenase complex.</text>
</comment>
<comment type="cofactor">
    <cofactor>
        <name>[4Fe-4S] cluster</name>
        <dbReference type="ChEBI" id="CHEBI:49883"/>
    </cofactor>
    <text>Binds 2 [4Fe-4S] clusters.</text>
</comment>
<comment type="biophysicochemical properties">
    <temperatureDependence>
        <text>Thermostable.</text>
    </temperatureDependence>
</comment>
<name>FER_METTL</name>
<organism>
    <name type="scientific">Methanothermococcus thermolithotrophicus</name>
    <name type="common">Methanococcus thermolithotrophicus</name>
    <dbReference type="NCBI Taxonomy" id="2186"/>
    <lineage>
        <taxon>Archaea</taxon>
        <taxon>Methanobacteriati</taxon>
        <taxon>Methanobacteriota</taxon>
        <taxon>Methanomada group</taxon>
        <taxon>Methanococci</taxon>
        <taxon>Methanococcales</taxon>
        <taxon>Methanococcaceae</taxon>
        <taxon>Methanothermococcus</taxon>
    </lineage>
</organism>
<dbReference type="PIR" id="S13476">
    <property type="entry name" value="S13476"/>
</dbReference>
<dbReference type="SMR" id="P21305"/>
<dbReference type="GO" id="GO:0051539">
    <property type="term" value="F:4 iron, 4 sulfur cluster binding"/>
    <property type="evidence" value="ECO:0007669"/>
    <property type="project" value="UniProtKB-KW"/>
</dbReference>
<dbReference type="GO" id="GO:0046872">
    <property type="term" value="F:metal ion binding"/>
    <property type="evidence" value="ECO:0007669"/>
    <property type="project" value="UniProtKB-KW"/>
</dbReference>
<dbReference type="GO" id="GO:0016491">
    <property type="term" value="F:oxidoreductase activity"/>
    <property type="evidence" value="ECO:0007669"/>
    <property type="project" value="UniProtKB-ARBA"/>
</dbReference>
<dbReference type="Gene3D" id="3.30.70.20">
    <property type="match status" value="1"/>
</dbReference>
<dbReference type="InterPro" id="IPR017896">
    <property type="entry name" value="4Fe4S_Fe-S-bd"/>
</dbReference>
<dbReference type="InterPro" id="IPR017900">
    <property type="entry name" value="4Fe4S_Fe_S_CS"/>
</dbReference>
<dbReference type="InterPro" id="IPR050572">
    <property type="entry name" value="Fe-S_Ferredoxin"/>
</dbReference>
<dbReference type="PANTHER" id="PTHR43687:SF5">
    <property type="entry name" value="4FE-4S FERREDOXIN-TYPE DOMAIN-CONTAINING PROTEIN"/>
    <property type="match status" value="1"/>
</dbReference>
<dbReference type="PANTHER" id="PTHR43687">
    <property type="entry name" value="ADENYLYLSULFATE REDUCTASE, BETA SUBUNIT"/>
    <property type="match status" value="1"/>
</dbReference>
<dbReference type="Pfam" id="PF13237">
    <property type="entry name" value="Fer4_10"/>
    <property type="match status" value="1"/>
</dbReference>
<dbReference type="SUPFAM" id="SSF54862">
    <property type="entry name" value="4Fe-4S ferredoxins"/>
    <property type="match status" value="1"/>
</dbReference>
<dbReference type="PROSITE" id="PS00198">
    <property type="entry name" value="4FE4S_FER_1"/>
    <property type="match status" value="1"/>
</dbReference>
<dbReference type="PROSITE" id="PS51379">
    <property type="entry name" value="4FE4S_FER_2"/>
    <property type="match status" value="2"/>
</dbReference>
<feature type="chain" id="PRO_0000159154" description="Ferredoxin">
    <location>
        <begin position="1"/>
        <end position="60"/>
    </location>
</feature>
<feature type="domain" description="4Fe-4S ferredoxin-type 1" evidence="2">
    <location>
        <begin position="2"/>
        <end position="30"/>
    </location>
</feature>
<feature type="domain" description="4Fe-4S ferredoxin-type 2" evidence="2">
    <location>
        <begin position="31"/>
        <end position="60"/>
    </location>
</feature>
<feature type="binding site" evidence="1">
    <location>
        <position position="9"/>
    </location>
    <ligand>
        <name>[4Fe-4S] cluster</name>
        <dbReference type="ChEBI" id="CHEBI:49883"/>
        <label>1</label>
    </ligand>
</feature>
<feature type="binding site" evidence="1">
    <location>
        <position position="14"/>
    </location>
    <ligand>
        <name>[4Fe-4S] cluster</name>
        <dbReference type="ChEBI" id="CHEBI:49883"/>
        <label>1</label>
    </ligand>
</feature>
<feature type="binding site" evidence="1">
    <location>
        <position position="17"/>
    </location>
    <ligand>
        <name>[4Fe-4S] cluster</name>
        <dbReference type="ChEBI" id="CHEBI:49883"/>
        <label>1</label>
    </ligand>
</feature>
<feature type="binding site" evidence="1">
    <location>
        <position position="21"/>
    </location>
    <ligand>
        <name>[4Fe-4S] cluster</name>
        <dbReference type="ChEBI" id="CHEBI:49883"/>
        <label>2</label>
    </ligand>
</feature>
<feature type="binding site" evidence="1">
    <location>
        <position position="41"/>
    </location>
    <ligand>
        <name>[4Fe-4S] cluster</name>
        <dbReference type="ChEBI" id="CHEBI:49883"/>
        <label>2</label>
    </ligand>
</feature>
<feature type="binding site" evidence="1">
    <location>
        <position position="44"/>
    </location>
    <ligand>
        <name>[4Fe-4S] cluster</name>
        <dbReference type="ChEBI" id="CHEBI:49883"/>
        <label>2</label>
    </ligand>
</feature>
<feature type="binding site" evidence="1">
    <location>
        <position position="47"/>
    </location>
    <ligand>
        <name>[4Fe-4S] cluster</name>
        <dbReference type="ChEBI" id="CHEBI:49883"/>
        <label>2</label>
    </ligand>
</feature>
<feature type="binding site" evidence="1">
    <location>
        <position position="51"/>
    </location>
    <ligand>
        <name>[4Fe-4S] cluster</name>
        <dbReference type="ChEBI" id="CHEBI:49883"/>
        <label>1</label>
    </ligand>
</feature>
<proteinExistence type="evidence at protein level"/>
<evidence type="ECO:0000250" key="1"/>
<evidence type="ECO:0000255" key="2">
    <source>
        <dbReference type="PROSITE-ProRule" id="PRU00711"/>
    </source>
</evidence>